<feature type="chain" id="PRO_1000191732" description="Ion-translocating oxidoreductase complex subunit A">
    <location>
        <begin position="1"/>
        <end position="193"/>
    </location>
</feature>
<feature type="transmembrane region" description="Helical" evidence="1">
    <location>
        <begin position="5"/>
        <end position="25"/>
    </location>
</feature>
<feature type="transmembrane region" description="Helical" evidence="1">
    <location>
        <begin position="47"/>
        <end position="67"/>
    </location>
</feature>
<feature type="transmembrane region" description="Helical" evidence="1">
    <location>
        <begin position="72"/>
        <end position="92"/>
    </location>
</feature>
<feature type="transmembrane region" description="Helical" evidence="1">
    <location>
        <begin position="102"/>
        <end position="122"/>
    </location>
</feature>
<feature type="transmembrane region" description="Helical" evidence="1">
    <location>
        <begin position="134"/>
        <end position="154"/>
    </location>
</feature>
<feature type="transmembrane region" description="Helical" evidence="1">
    <location>
        <begin position="171"/>
        <end position="191"/>
    </location>
</feature>
<sequence length="193" mass="20893">MTDYLLLFVGTVLVNNFVLVKFLGLCPFMGVSKKLETAMGMGLATTFVMTLASICAWLIDTWILIPLDLIYLRTLAFILVIAVVVQFTEMVVRKTSPALYRLLGIFLPLITTNCAVLGVALLNINLGHHFLQSALYGFSAAVGFSLVMVLFAAIRERLAVADVPAPFRGNAIALITAGLMSLAFMGFSGLVKL</sequence>
<keyword id="KW-0997">Cell inner membrane</keyword>
<keyword id="KW-1003">Cell membrane</keyword>
<keyword id="KW-0249">Electron transport</keyword>
<keyword id="KW-0472">Membrane</keyword>
<keyword id="KW-1278">Translocase</keyword>
<keyword id="KW-0812">Transmembrane</keyword>
<keyword id="KW-1133">Transmembrane helix</keyword>
<keyword id="KW-0813">Transport</keyword>
<organism>
    <name type="scientific">Salmonella dublin (strain CT_02021853)</name>
    <dbReference type="NCBI Taxonomy" id="439851"/>
    <lineage>
        <taxon>Bacteria</taxon>
        <taxon>Pseudomonadati</taxon>
        <taxon>Pseudomonadota</taxon>
        <taxon>Gammaproteobacteria</taxon>
        <taxon>Enterobacterales</taxon>
        <taxon>Enterobacteriaceae</taxon>
        <taxon>Salmonella</taxon>
    </lineage>
</organism>
<protein>
    <recommendedName>
        <fullName evidence="1">Ion-translocating oxidoreductase complex subunit A</fullName>
        <ecNumber evidence="1">7.-.-.-</ecNumber>
    </recommendedName>
    <alternativeName>
        <fullName evidence="1">Rsx electron transport complex subunit A</fullName>
    </alternativeName>
</protein>
<name>RSXA_SALDC</name>
<accession>B5FIE5</accession>
<evidence type="ECO:0000255" key="1">
    <source>
        <dbReference type="HAMAP-Rule" id="MF_00459"/>
    </source>
</evidence>
<proteinExistence type="inferred from homology"/>
<reference key="1">
    <citation type="journal article" date="2011" name="J. Bacteriol.">
        <title>Comparative genomics of 28 Salmonella enterica isolates: evidence for CRISPR-mediated adaptive sublineage evolution.</title>
        <authorList>
            <person name="Fricke W.F."/>
            <person name="Mammel M.K."/>
            <person name="McDermott P.F."/>
            <person name="Tartera C."/>
            <person name="White D.G."/>
            <person name="Leclerc J.E."/>
            <person name="Ravel J."/>
            <person name="Cebula T.A."/>
        </authorList>
    </citation>
    <scope>NUCLEOTIDE SEQUENCE [LARGE SCALE GENOMIC DNA]</scope>
    <source>
        <strain>CT_02021853</strain>
    </source>
</reference>
<gene>
    <name evidence="1" type="primary">rsxA</name>
    <name type="synonym">rnfA</name>
    <name type="ordered locus">SeD_A1883</name>
</gene>
<comment type="function">
    <text evidence="1">Part of a membrane-bound complex that couples electron transfer with translocation of ions across the membrane. Required to maintain the reduced state of SoxR.</text>
</comment>
<comment type="subunit">
    <text evidence="1">The complex is composed of six subunits: RsxA, RsxB, RsxC, RsxD, RsxE and RsxG.</text>
</comment>
<comment type="subcellular location">
    <subcellularLocation>
        <location evidence="1">Cell inner membrane</location>
        <topology evidence="1">Multi-pass membrane protein</topology>
    </subcellularLocation>
</comment>
<comment type="similarity">
    <text evidence="1">Belongs to the NqrDE/RnfAE family.</text>
</comment>
<dbReference type="EC" id="7.-.-.-" evidence="1"/>
<dbReference type="EMBL" id="CP001144">
    <property type="protein sequence ID" value="ACH77993.1"/>
    <property type="molecule type" value="Genomic_DNA"/>
</dbReference>
<dbReference type="RefSeq" id="WP_000133179.1">
    <property type="nucleotide sequence ID" value="NC_011205.1"/>
</dbReference>
<dbReference type="SMR" id="B5FIE5"/>
<dbReference type="GeneID" id="66755900"/>
<dbReference type="KEGG" id="sed:SeD_A1883"/>
<dbReference type="HOGENOM" id="CLU_095255_1_0_6"/>
<dbReference type="Proteomes" id="UP000008322">
    <property type="component" value="Chromosome"/>
</dbReference>
<dbReference type="GO" id="GO:0005886">
    <property type="term" value="C:plasma membrane"/>
    <property type="evidence" value="ECO:0007669"/>
    <property type="project" value="UniProtKB-SubCell"/>
</dbReference>
<dbReference type="GO" id="GO:0022900">
    <property type="term" value="P:electron transport chain"/>
    <property type="evidence" value="ECO:0007669"/>
    <property type="project" value="UniProtKB-UniRule"/>
</dbReference>
<dbReference type="HAMAP" id="MF_00459">
    <property type="entry name" value="RsxA_RnfA"/>
    <property type="match status" value="1"/>
</dbReference>
<dbReference type="InterPro" id="IPR011293">
    <property type="entry name" value="Ion_transpt_RnfA/RsxA"/>
</dbReference>
<dbReference type="InterPro" id="IPR003667">
    <property type="entry name" value="NqrDE/RnfAE"/>
</dbReference>
<dbReference type="InterPro" id="IPR050133">
    <property type="entry name" value="NqrDE/RnfAE_oxidrdctase"/>
</dbReference>
<dbReference type="NCBIfam" id="NF003481">
    <property type="entry name" value="PRK05151.1"/>
    <property type="match status" value="1"/>
</dbReference>
<dbReference type="NCBIfam" id="TIGR01943">
    <property type="entry name" value="rnfA"/>
    <property type="match status" value="1"/>
</dbReference>
<dbReference type="PANTHER" id="PTHR30335">
    <property type="entry name" value="INTEGRAL MEMBRANE PROTEIN OF SOXR-REDUCING COMPLEX"/>
    <property type="match status" value="1"/>
</dbReference>
<dbReference type="PANTHER" id="PTHR30335:SF0">
    <property type="entry name" value="ION-TRANSLOCATING OXIDOREDUCTASE COMPLEX SUBUNIT A"/>
    <property type="match status" value="1"/>
</dbReference>
<dbReference type="Pfam" id="PF02508">
    <property type="entry name" value="Rnf-Nqr"/>
    <property type="match status" value="1"/>
</dbReference>
<dbReference type="PIRSF" id="PIRSF006102">
    <property type="entry name" value="NQR_DE"/>
    <property type="match status" value="1"/>
</dbReference>